<reference key="1">
    <citation type="submission" date="2008-06" db="EMBL/GenBank/DDBJ databases">
        <title>Complete sequence of Stenotrophomonas maltophilia R551-3.</title>
        <authorList>
            <consortium name="US DOE Joint Genome Institute"/>
            <person name="Lucas S."/>
            <person name="Copeland A."/>
            <person name="Lapidus A."/>
            <person name="Glavina del Rio T."/>
            <person name="Dalin E."/>
            <person name="Tice H."/>
            <person name="Pitluck S."/>
            <person name="Chain P."/>
            <person name="Malfatti S."/>
            <person name="Shin M."/>
            <person name="Vergez L."/>
            <person name="Lang D."/>
            <person name="Schmutz J."/>
            <person name="Larimer F."/>
            <person name="Land M."/>
            <person name="Hauser L."/>
            <person name="Kyrpides N."/>
            <person name="Mikhailova N."/>
            <person name="Taghavi S."/>
            <person name="Monchy S."/>
            <person name="Newman L."/>
            <person name="Vangronsveld J."/>
            <person name="van der Lelie D."/>
            <person name="Richardson P."/>
        </authorList>
    </citation>
    <scope>NUCLEOTIDE SEQUENCE [LARGE SCALE GENOMIC DNA]</scope>
    <source>
        <strain>R551-3</strain>
    </source>
</reference>
<keyword id="KW-0028">Amino-acid biosynthesis</keyword>
<keyword id="KW-0963">Cytoplasm</keyword>
<keyword id="KW-0368">Histidine biosynthesis</keyword>
<keyword id="KW-0456">Lyase</keyword>
<proteinExistence type="inferred from homology"/>
<protein>
    <recommendedName>
        <fullName evidence="1">Imidazole glycerol phosphate synthase subunit HisF</fullName>
        <ecNumber evidence="1">4.3.2.10</ecNumber>
    </recommendedName>
    <alternativeName>
        <fullName evidence="1">IGP synthase cyclase subunit</fullName>
    </alternativeName>
    <alternativeName>
        <fullName evidence="1">IGP synthase subunit HisF</fullName>
    </alternativeName>
    <alternativeName>
        <fullName evidence="1">ImGP synthase subunit HisF</fullName>
        <shortName evidence="1">IGPS subunit HisF</shortName>
    </alternativeName>
</protein>
<dbReference type="EC" id="4.3.2.10" evidence="1"/>
<dbReference type="EMBL" id="CP001111">
    <property type="protein sequence ID" value="ACF51466.1"/>
    <property type="molecule type" value="Genomic_DNA"/>
</dbReference>
<dbReference type="RefSeq" id="WP_012510887.1">
    <property type="nucleotide sequence ID" value="NC_011071.1"/>
</dbReference>
<dbReference type="SMR" id="B4STP2"/>
<dbReference type="STRING" id="391008.Smal_1762"/>
<dbReference type="KEGG" id="smt:Smal_1762"/>
<dbReference type="eggNOG" id="COG0107">
    <property type="taxonomic scope" value="Bacteria"/>
</dbReference>
<dbReference type="HOGENOM" id="CLU_048577_4_0_6"/>
<dbReference type="OrthoDB" id="9781903at2"/>
<dbReference type="UniPathway" id="UPA00031">
    <property type="reaction ID" value="UER00010"/>
</dbReference>
<dbReference type="Proteomes" id="UP000001867">
    <property type="component" value="Chromosome"/>
</dbReference>
<dbReference type="GO" id="GO:0005737">
    <property type="term" value="C:cytoplasm"/>
    <property type="evidence" value="ECO:0007669"/>
    <property type="project" value="UniProtKB-SubCell"/>
</dbReference>
<dbReference type="GO" id="GO:0000107">
    <property type="term" value="F:imidazoleglycerol-phosphate synthase activity"/>
    <property type="evidence" value="ECO:0007669"/>
    <property type="project" value="UniProtKB-UniRule"/>
</dbReference>
<dbReference type="GO" id="GO:0016829">
    <property type="term" value="F:lyase activity"/>
    <property type="evidence" value="ECO:0007669"/>
    <property type="project" value="UniProtKB-KW"/>
</dbReference>
<dbReference type="GO" id="GO:0000105">
    <property type="term" value="P:L-histidine biosynthetic process"/>
    <property type="evidence" value="ECO:0007669"/>
    <property type="project" value="UniProtKB-UniRule"/>
</dbReference>
<dbReference type="CDD" id="cd04731">
    <property type="entry name" value="HisF"/>
    <property type="match status" value="1"/>
</dbReference>
<dbReference type="FunFam" id="3.20.20.70:FF:000006">
    <property type="entry name" value="Imidazole glycerol phosphate synthase subunit HisF"/>
    <property type="match status" value="1"/>
</dbReference>
<dbReference type="Gene3D" id="3.20.20.70">
    <property type="entry name" value="Aldolase class I"/>
    <property type="match status" value="1"/>
</dbReference>
<dbReference type="HAMAP" id="MF_01013">
    <property type="entry name" value="HisF"/>
    <property type="match status" value="1"/>
</dbReference>
<dbReference type="InterPro" id="IPR013785">
    <property type="entry name" value="Aldolase_TIM"/>
</dbReference>
<dbReference type="InterPro" id="IPR006062">
    <property type="entry name" value="His_biosynth"/>
</dbReference>
<dbReference type="InterPro" id="IPR004651">
    <property type="entry name" value="HisF"/>
</dbReference>
<dbReference type="InterPro" id="IPR050064">
    <property type="entry name" value="IGPS_HisA/HisF"/>
</dbReference>
<dbReference type="InterPro" id="IPR011060">
    <property type="entry name" value="RibuloseP-bd_barrel"/>
</dbReference>
<dbReference type="NCBIfam" id="TIGR00735">
    <property type="entry name" value="hisF"/>
    <property type="match status" value="1"/>
</dbReference>
<dbReference type="PANTHER" id="PTHR21235:SF2">
    <property type="entry name" value="IMIDAZOLE GLYCEROL PHOSPHATE SYNTHASE HISHF"/>
    <property type="match status" value="1"/>
</dbReference>
<dbReference type="PANTHER" id="PTHR21235">
    <property type="entry name" value="IMIDAZOLE GLYCEROL PHOSPHATE SYNTHASE SUBUNIT HISF/H IGP SYNTHASE SUBUNIT HISF/H"/>
    <property type="match status" value="1"/>
</dbReference>
<dbReference type="Pfam" id="PF00977">
    <property type="entry name" value="His_biosynth"/>
    <property type="match status" value="1"/>
</dbReference>
<dbReference type="SUPFAM" id="SSF51366">
    <property type="entry name" value="Ribulose-phoshate binding barrel"/>
    <property type="match status" value="1"/>
</dbReference>
<sequence>MLSRRIIPCLDVRDGRVVKGVRFRDHVDMGDIAELAQRYRDQGADELVFYDIGASPEARSVDVAWIERIARLIDIPFCVAGGIDSVETARRVLFAGADKVSINSPALGRPELITELADEFGVQCVVVGVDSVREADGQWRVRRFSGDPDKTQAVPLRTLDWIVDAQRRGAGEIVLNCMDSDGVRRGYDVVQLQQARALCQVPLIASGGAGAMEHFAEAFDQADVDGALAASVFHSGAIAIPELKRYLRGQQIEVRDVY</sequence>
<feature type="chain" id="PRO_1000135050" description="Imidazole glycerol phosphate synthase subunit HisF">
    <location>
        <begin position="1"/>
        <end position="258"/>
    </location>
</feature>
<feature type="active site" evidence="1">
    <location>
        <position position="11"/>
    </location>
</feature>
<feature type="active site" evidence="1">
    <location>
        <position position="130"/>
    </location>
</feature>
<name>HIS6_STRM5</name>
<comment type="function">
    <text evidence="1">IGPS catalyzes the conversion of PRFAR and glutamine to IGP, AICAR and glutamate. The HisF subunit catalyzes the cyclization activity that produces IGP and AICAR from PRFAR using the ammonia provided by the HisH subunit.</text>
</comment>
<comment type="catalytic activity">
    <reaction evidence="1">
        <text>5-[(5-phospho-1-deoxy-D-ribulos-1-ylimino)methylamino]-1-(5-phospho-beta-D-ribosyl)imidazole-4-carboxamide + L-glutamine = D-erythro-1-(imidazol-4-yl)glycerol 3-phosphate + 5-amino-1-(5-phospho-beta-D-ribosyl)imidazole-4-carboxamide + L-glutamate + H(+)</text>
        <dbReference type="Rhea" id="RHEA:24793"/>
        <dbReference type="ChEBI" id="CHEBI:15378"/>
        <dbReference type="ChEBI" id="CHEBI:29985"/>
        <dbReference type="ChEBI" id="CHEBI:58278"/>
        <dbReference type="ChEBI" id="CHEBI:58359"/>
        <dbReference type="ChEBI" id="CHEBI:58475"/>
        <dbReference type="ChEBI" id="CHEBI:58525"/>
        <dbReference type="EC" id="4.3.2.10"/>
    </reaction>
</comment>
<comment type="pathway">
    <text evidence="1">Amino-acid biosynthesis; L-histidine biosynthesis; L-histidine from 5-phospho-alpha-D-ribose 1-diphosphate: step 5/9.</text>
</comment>
<comment type="subunit">
    <text evidence="1">Heterodimer of HisH and HisF.</text>
</comment>
<comment type="subcellular location">
    <subcellularLocation>
        <location evidence="1">Cytoplasm</location>
    </subcellularLocation>
</comment>
<comment type="similarity">
    <text evidence="1">Belongs to the HisA/HisF family.</text>
</comment>
<evidence type="ECO:0000255" key="1">
    <source>
        <dbReference type="HAMAP-Rule" id="MF_01013"/>
    </source>
</evidence>
<gene>
    <name evidence="1" type="primary">hisF</name>
    <name type="ordered locus">Smal_1762</name>
</gene>
<accession>B4STP2</accession>
<organism>
    <name type="scientific">Stenotrophomonas maltophilia (strain R551-3)</name>
    <dbReference type="NCBI Taxonomy" id="391008"/>
    <lineage>
        <taxon>Bacteria</taxon>
        <taxon>Pseudomonadati</taxon>
        <taxon>Pseudomonadota</taxon>
        <taxon>Gammaproteobacteria</taxon>
        <taxon>Lysobacterales</taxon>
        <taxon>Lysobacteraceae</taxon>
        <taxon>Stenotrophomonas</taxon>
        <taxon>Stenotrophomonas maltophilia group</taxon>
    </lineage>
</organism>